<name>MNTP_ELUMP</name>
<keyword id="KW-0997">Cell inner membrane</keyword>
<keyword id="KW-1003">Cell membrane</keyword>
<keyword id="KW-0406">Ion transport</keyword>
<keyword id="KW-0464">Manganese</keyword>
<keyword id="KW-0472">Membrane</keyword>
<keyword id="KW-1185">Reference proteome</keyword>
<keyword id="KW-0812">Transmembrane</keyword>
<keyword id="KW-1133">Transmembrane helix</keyword>
<keyword id="KW-0813">Transport</keyword>
<gene>
    <name evidence="1" type="primary">mntP</name>
    <name type="ordered locus">Emin_1326</name>
</gene>
<comment type="function">
    <text evidence="1">Probably functions as a manganese efflux pump.</text>
</comment>
<comment type="subcellular location">
    <subcellularLocation>
        <location evidence="1">Cell inner membrane</location>
        <topology evidence="1">Multi-pass membrane protein</topology>
    </subcellularLocation>
</comment>
<comment type="similarity">
    <text evidence="1">Belongs to the MntP (TC 9.B.29) family.</text>
</comment>
<protein>
    <recommendedName>
        <fullName evidence="1">Putative manganese efflux pump MntP</fullName>
    </recommendedName>
</protein>
<feature type="chain" id="PRO_1000200021" description="Putative manganese efflux pump MntP">
    <location>
        <begin position="1"/>
        <end position="185"/>
    </location>
</feature>
<feature type="transmembrane region" description="Helical" evidence="1">
    <location>
        <begin position="3"/>
        <end position="23"/>
    </location>
</feature>
<feature type="transmembrane region" description="Helical" evidence="1">
    <location>
        <begin position="40"/>
        <end position="60"/>
    </location>
</feature>
<feature type="transmembrane region" description="Helical" evidence="1">
    <location>
        <begin position="64"/>
        <end position="84"/>
    </location>
</feature>
<feature type="transmembrane region" description="Helical" evidence="1">
    <location>
        <begin position="102"/>
        <end position="122"/>
    </location>
</feature>
<feature type="transmembrane region" description="Helical" evidence="1">
    <location>
        <begin position="124"/>
        <end position="144"/>
    </location>
</feature>
<feature type="transmembrane region" description="Helical" evidence="1">
    <location>
        <begin position="165"/>
        <end position="185"/>
    </location>
</feature>
<dbReference type="EMBL" id="CP001055">
    <property type="protein sequence ID" value="ACC98876.1"/>
    <property type="molecule type" value="Genomic_DNA"/>
</dbReference>
<dbReference type="RefSeq" id="WP_012415491.1">
    <property type="nucleotide sequence ID" value="NC_010644.1"/>
</dbReference>
<dbReference type="STRING" id="445932.Emin_1326"/>
<dbReference type="KEGG" id="emi:Emin_1326"/>
<dbReference type="HOGENOM" id="CLU_096410_3_0_0"/>
<dbReference type="OrthoDB" id="9811590at2"/>
<dbReference type="Proteomes" id="UP000001029">
    <property type="component" value="Chromosome"/>
</dbReference>
<dbReference type="GO" id="GO:0005886">
    <property type="term" value="C:plasma membrane"/>
    <property type="evidence" value="ECO:0007669"/>
    <property type="project" value="UniProtKB-SubCell"/>
</dbReference>
<dbReference type="GO" id="GO:0005384">
    <property type="term" value="F:manganese ion transmembrane transporter activity"/>
    <property type="evidence" value="ECO:0007669"/>
    <property type="project" value="UniProtKB-UniRule"/>
</dbReference>
<dbReference type="HAMAP" id="MF_01521">
    <property type="entry name" value="MntP_pump"/>
    <property type="match status" value="1"/>
</dbReference>
<dbReference type="InterPro" id="IPR003810">
    <property type="entry name" value="Mntp/YtaF"/>
</dbReference>
<dbReference type="InterPro" id="IPR022929">
    <property type="entry name" value="Put_MntP"/>
</dbReference>
<dbReference type="PANTHER" id="PTHR35529">
    <property type="entry name" value="MANGANESE EFFLUX PUMP MNTP-RELATED"/>
    <property type="match status" value="1"/>
</dbReference>
<dbReference type="PANTHER" id="PTHR35529:SF1">
    <property type="entry name" value="MANGANESE EFFLUX PUMP MNTP-RELATED"/>
    <property type="match status" value="1"/>
</dbReference>
<dbReference type="Pfam" id="PF02659">
    <property type="entry name" value="Mntp"/>
    <property type="match status" value="1"/>
</dbReference>
<accession>B2KED0</accession>
<proteinExistence type="inferred from homology"/>
<reference key="1">
    <citation type="journal article" date="2009" name="Appl. Environ. Microbiol.">
        <title>Genomic analysis of 'Elusimicrobium minutum,' the first cultivated representative of the phylum 'Elusimicrobia' (formerly termite group 1).</title>
        <authorList>
            <person name="Herlemann D.P.R."/>
            <person name="Geissinger O."/>
            <person name="Ikeda-Ohtsubo W."/>
            <person name="Kunin V."/>
            <person name="Sun H."/>
            <person name="Lapidus A."/>
            <person name="Hugenholtz P."/>
            <person name="Brune A."/>
        </authorList>
    </citation>
    <scope>NUCLEOTIDE SEQUENCE [LARGE SCALE GENOMIC DNA]</scope>
    <source>
        <strain>Pei191</strain>
    </source>
</reference>
<evidence type="ECO:0000255" key="1">
    <source>
        <dbReference type="HAMAP-Rule" id="MF_01521"/>
    </source>
</evidence>
<sequence length="185" mass="19781">MDIFTLLMIAAGLSMDNFAVSLASGCNPNIKIKDISKAALLFVAAHLVMFSLGWFGVSVIAERFDAYDHWISFGLLVFIGLRMIKEAAAKKGQQECVNITETFSRLLLIALATSMDALAVGISLSLAGVHFVLSVAAISFFVLITTFFGFKIGGKLGDKLGIKAEIFGGIVLIGIALKILLDAMM</sequence>
<organism>
    <name type="scientific">Elusimicrobium minutum (strain Pei191)</name>
    <dbReference type="NCBI Taxonomy" id="445932"/>
    <lineage>
        <taxon>Bacteria</taxon>
        <taxon>Pseudomonadati</taxon>
        <taxon>Elusimicrobiota</taxon>
        <taxon>Elusimicrobia</taxon>
        <taxon>Elusimicrobiales</taxon>
        <taxon>Elusimicrobiaceae</taxon>
        <taxon>Elusimicrobium</taxon>
    </lineage>
</organism>